<organism>
    <name type="scientific">Vanderwaltozyma polyspora (strain ATCC 22028 / DSM 70294 / BCRC 21397 / CBS 2163 / NBRC 10782 / NRRL Y-8283 / UCD 57-17)</name>
    <name type="common">Kluyveromyces polysporus</name>
    <dbReference type="NCBI Taxonomy" id="436907"/>
    <lineage>
        <taxon>Eukaryota</taxon>
        <taxon>Fungi</taxon>
        <taxon>Dikarya</taxon>
        <taxon>Ascomycota</taxon>
        <taxon>Saccharomycotina</taxon>
        <taxon>Saccharomycetes</taxon>
        <taxon>Saccharomycetales</taxon>
        <taxon>Saccharomycetaceae</taxon>
        <taxon>Vanderwaltozyma</taxon>
    </lineage>
</organism>
<sequence>MSRFFAASYEYDSASSSSEEDLLSSSEEELLSSSSLSEEESDDSFFNDSESESDFDSDDSDAKPYGPDWFKKQEFRRGGGGGNKFLKGASYSDSDESDEASKKVVKSAKEKLLDEMQTSSGKIDAAELTNDWITILNEFDSVTRLLTRAQQQNFGTPNIFVKVVAQVEDAVAASQEEINNKAVAKAFNTAKQRVKKISREHQTLLAKYREDPESFEKETSVEVDATPELAQFAVGKKTTDLSSIATTSSETGFFPALSIVLDSRGKKNIDQQALAQSMDDLLQTTKTPYEKIIAYLTLIPIRLDSSTNLSYQPIDQWKATYNDVSSLLSILDENINTYQVSELAPFNDSLENEPEANEKGVKTILGSILSFVDRLDDEFTKSLLNTDPHSSDYLIRLRDEQAIYNLILRTQLYLEATLPEDRQIDLLSRIFVRRLNHIYYKSNELIRIMEVAAWKVAPSSYTSKLTPYDGAVSDSYLSGVISTLTDALSKQQNQSLRKRAVLYNVYYTALNKEFQVAKDMLIESKVQSFINKSDPSLQILFNRVVVQLGLSAFKLCLIEECHQILNDLLASSHLREILGQQTLQRVTAHSNSSNADEREKLCLPFHEHINLDLIDVVFMTCSLLIEIPQMTAFYSGIKIKKIPYSQKSIRRALEHYEKSSFQGPPETLRDYILHSAKEMQKGNWKKSFELLKSIQAWALLPNSASVLDNLAERLQVESLKTYFFTNKRFYSKLSMKKLSDLFNLPEDKIVESLQAVITEYEIDASFNEDKSVLSIAKGAEITKLEEVASKLNKEVKITKERLHPSRGRR</sequence>
<feature type="chain" id="PRO_0000364290" description="Eukaryotic translation initiation factor 3 subunit C">
    <location>
        <begin position="1"/>
        <end position="809"/>
    </location>
</feature>
<feature type="domain" description="PCI" evidence="2">
    <location>
        <begin position="605"/>
        <end position="780"/>
    </location>
</feature>
<feature type="region of interest" description="Disordered" evidence="3">
    <location>
        <begin position="1"/>
        <end position="102"/>
    </location>
</feature>
<feature type="compositionally biased region" description="Acidic residues" evidence="3">
    <location>
        <begin position="18"/>
        <end position="30"/>
    </location>
</feature>
<feature type="compositionally biased region" description="Acidic residues" evidence="3">
    <location>
        <begin position="37"/>
        <end position="59"/>
    </location>
</feature>
<protein>
    <recommendedName>
        <fullName evidence="1">Eukaryotic translation initiation factor 3 subunit C</fullName>
        <shortName evidence="1">eIF3c</shortName>
    </recommendedName>
    <alternativeName>
        <fullName evidence="1">Eukaryotic translation initiation factor 3 93 kDa subunit homolog</fullName>
        <shortName evidence="1">eIF3 p93</shortName>
    </alternativeName>
    <alternativeName>
        <fullName evidence="1">Translation initiation factor eIF3, p93 subunit homolog</fullName>
    </alternativeName>
</protein>
<dbReference type="EMBL" id="DS480423">
    <property type="protein sequence ID" value="EDO16512.1"/>
    <property type="molecule type" value="Genomic_DNA"/>
</dbReference>
<dbReference type="RefSeq" id="XP_001644370.1">
    <property type="nucleotide sequence ID" value="XM_001644320.1"/>
</dbReference>
<dbReference type="SMR" id="A7TML4"/>
<dbReference type="FunCoup" id="A7TML4">
    <property type="interactions" value="1261"/>
</dbReference>
<dbReference type="STRING" id="436907.A7TML4"/>
<dbReference type="GeneID" id="5544645"/>
<dbReference type="KEGG" id="vpo:Kpol_513p28"/>
<dbReference type="eggNOG" id="KOG1076">
    <property type="taxonomic scope" value="Eukaryota"/>
</dbReference>
<dbReference type="HOGENOM" id="CLU_004304_0_2_1"/>
<dbReference type="InParanoid" id="A7TML4"/>
<dbReference type="OMA" id="FRCGLIK"/>
<dbReference type="OrthoDB" id="29647at2759"/>
<dbReference type="PhylomeDB" id="A7TML4"/>
<dbReference type="Proteomes" id="UP000000267">
    <property type="component" value="Unassembled WGS sequence"/>
</dbReference>
<dbReference type="GO" id="GO:0010494">
    <property type="term" value="C:cytoplasmic stress granule"/>
    <property type="evidence" value="ECO:0007669"/>
    <property type="project" value="EnsemblFungi"/>
</dbReference>
<dbReference type="GO" id="GO:0016282">
    <property type="term" value="C:eukaryotic 43S preinitiation complex"/>
    <property type="evidence" value="ECO:0007669"/>
    <property type="project" value="UniProtKB-UniRule"/>
</dbReference>
<dbReference type="GO" id="GO:0033290">
    <property type="term" value="C:eukaryotic 48S preinitiation complex"/>
    <property type="evidence" value="ECO:0007669"/>
    <property type="project" value="UniProtKB-UniRule"/>
</dbReference>
<dbReference type="GO" id="GO:0005852">
    <property type="term" value="C:eukaryotic translation initiation factor 3 complex"/>
    <property type="evidence" value="ECO:0007669"/>
    <property type="project" value="UniProtKB-UniRule"/>
</dbReference>
<dbReference type="GO" id="GO:0043614">
    <property type="term" value="C:multi-eIF complex"/>
    <property type="evidence" value="ECO:0007669"/>
    <property type="project" value="EnsemblFungi"/>
</dbReference>
<dbReference type="GO" id="GO:0003723">
    <property type="term" value="F:RNA binding"/>
    <property type="evidence" value="ECO:0007669"/>
    <property type="project" value="InterPro"/>
</dbReference>
<dbReference type="GO" id="GO:0003743">
    <property type="term" value="F:translation initiation factor activity"/>
    <property type="evidence" value="ECO:0007669"/>
    <property type="project" value="UniProtKB-UniRule"/>
</dbReference>
<dbReference type="GO" id="GO:0031369">
    <property type="term" value="F:translation initiation factor binding"/>
    <property type="evidence" value="ECO:0007669"/>
    <property type="project" value="EnsemblFungi"/>
</dbReference>
<dbReference type="GO" id="GO:0001732">
    <property type="term" value="P:formation of cytoplasmic translation initiation complex"/>
    <property type="evidence" value="ECO:0007669"/>
    <property type="project" value="UniProtKB-UniRule"/>
</dbReference>
<dbReference type="HAMAP" id="MF_03002">
    <property type="entry name" value="eIF3c"/>
    <property type="match status" value="1"/>
</dbReference>
<dbReference type="InterPro" id="IPR027516">
    <property type="entry name" value="EIF3C"/>
</dbReference>
<dbReference type="InterPro" id="IPR008905">
    <property type="entry name" value="EIF3C_N_dom"/>
</dbReference>
<dbReference type="InterPro" id="IPR000717">
    <property type="entry name" value="PCI_dom"/>
</dbReference>
<dbReference type="PANTHER" id="PTHR13937">
    <property type="entry name" value="EUKARYOTIC TRANSLATION INITATION FACTOR 3, SUBUNIT 8 EIF3S8 -RELATED"/>
    <property type="match status" value="1"/>
</dbReference>
<dbReference type="PANTHER" id="PTHR13937:SF0">
    <property type="entry name" value="EUKARYOTIC TRANSLATION INITIATION FACTOR 3 SUBUNIT C-RELATED"/>
    <property type="match status" value="1"/>
</dbReference>
<dbReference type="Pfam" id="PF05470">
    <property type="entry name" value="eIF-3c_N"/>
    <property type="match status" value="2"/>
</dbReference>
<dbReference type="Pfam" id="PF01399">
    <property type="entry name" value="PCI"/>
    <property type="match status" value="1"/>
</dbReference>
<dbReference type="SMART" id="SM00088">
    <property type="entry name" value="PINT"/>
    <property type="match status" value="1"/>
</dbReference>
<dbReference type="PROSITE" id="PS50250">
    <property type="entry name" value="PCI"/>
    <property type="match status" value="1"/>
</dbReference>
<comment type="function">
    <text evidence="1">Component of the eukaryotic translation initiation factor 3 (eIF-3) complex, which is involved in protein synthesis of a specialized repertoire of mRNAs and, together with other initiation factors, stimulates binding of mRNA and methionyl-tRNAi to the 40S ribosome. The eIF-3 complex specifically targets and initiates translation of a subset of mRNAs involved in cell proliferation.</text>
</comment>
<comment type="subunit">
    <text evidence="1">Component of the eukaryotic translation initiation factor 3 (eIF-3) complex.</text>
</comment>
<comment type="subcellular location">
    <subcellularLocation>
        <location evidence="1">Cytoplasm</location>
    </subcellularLocation>
</comment>
<comment type="similarity">
    <text evidence="1">Belongs to the eIF-3 subunit C family.</text>
</comment>
<name>EIF3C_VANPO</name>
<reference key="1">
    <citation type="journal article" date="2007" name="Proc. Natl. Acad. Sci. U.S.A.">
        <title>Independent sorting-out of thousands of duplicated gene pairs in two yeast species descended from a whole-genome duplication.</title>
        <authorList>
            <person name="Scannell D.R."/>
            <person name="Frank A.C."/>
            <person name="Conant G.C."/>
            <person name="Byrne K.P."/>
            <person name="Woolfit M."/>
            <person name="Wolfe K.H."/>
        </authorList>
    </citation>
    <scope>NUCLEOTIDE SEQUENCE [LARGE SCALE GENOMIC DNA]</scope>
    <source>
        <strain>ATCC 22028 / DSM 70294 / BCRC 21397 / CBS 2163 / NBRC 10782 / NRRL Y-8283 / UCD 57-17</strain>
    </source>
</reference>
<proteinExistence type="inferred from homology"/>
<gene>
    <name evidence="1" type="primary">NIP1</name>
    <name type="ORF">Kpol_513p28</name>
</gene>
<keyword id="KW-0963">Cytoplasm</keyword>
<keyword id="KW-0396">Initiation factor</keyword>
<keyword id="KW-0648">Protein biosynthesis</keyword>
<keyword id="KW-1185">Reference proteome</keyword>
<accession>A7TML4</accession>
<evidence type="ECO:0000255" key="1">
    <source>
        <dbReference type="HAMAP-Rule" id="MF_03002"/>
    </source>
</evidence>
<evidence type="ECO:0000255" key="2">
    <source>
        <dbReference type="PROSITE-ProRule" id="PRU01185"/>
    </source>
</evidence>
<evidence type="ECO:0000256" key="3">
    <source>
        <dbReference type="SAM" id="MobiDB-lite"/>
    </source>
</evidence>